<evidence type="ECO:0000250" key="1">
    <source>
        <dbReference type="UniProtKB" id="O14976"/>
    </source>
</evidence>
<evidence type="ECO:0000250" key="2">
    <source>
        <dbReference type="UniProtKB" id="P97874"/>
    </source>
</evidence>
<evidence type="ECO:0000255" key="3">
    <source>
        <dbReference type="PROSITE-ProRule" id="PRU00159"/>
    </source>
</evidence>
<evidence type="ECO:0000255" key="4">
    <source>
        <dbReference type="PROSITE-ProRule" id="PRU00286"/>
    </source>
</evidence>
<evidence type="ECO:0000255" key="5">
    <source>
        <dbReference type="PROSITE-ProRule" id="PRU00589"/>
    </source>
</evidence>
<evidence type="ECO:0000255" key="6">
    <source>
        <dbReference type="PROSITE-ProRule" id="PRU00590"/>
    </source>
</evidence>
<evidence type="ECO:0000255" key="7">
    <source>
        <dbReference type="PROSITE-ProRule" id="PRU10027"/>
    </source>
</evidence>
<evidence type="ECO:0000256" key="8">
    <source>
        <dbReference type="SAM" id="MobiDB-lite"/>
    </source>
</evidence>
<evidence type="ECO:0000303" key="9">
    <source>
    </source>
</evidence>
<evidence type="ECO:0000305" key="10"/>
<evidence type="ECO:0000312" key="11">
    <source>
        <dbReference type="MGI" id="MGI:2442153"/>
    </source>
</evidence>
<evidence type="ECO:0007744" key="12">
    <source>
    </source>
</evidence>
<evidence type="ECO:0007744" key="13">
    <source>
    </source>
</evidence>
<evidence type="ECO:0007744" key="14">
    <source>
    </source>
</evidence>
<gene>
    <name evidence="11" type="primary">Gak</name>
    <name type="synonym">DNAJC26</name>
</gene>
<sequence length="1305" mass="143641">MSLLQSALDFLAGPGSLGGAAGRDQSDFVGQTVELGELRLRVRRVLAEGGFAFVYEAQDLGSGREYALKRLLSNEEEKNRAIIQEVCFLKKLSGHPNIVQFCSAASIGKEESDTGQAEFLLLTELCKGQLVEFLKRVECKGPLSCDSILKIFYQTCRAVQHMHRQKPPIIHRDLKVENLLLSNQGTIKLCDFGSATTISHYPDYSWSAQKRAMVEEEITRNTTPMYRTPEIVDLYSNFPIGEKQDIWALGCILYLLCFRQHPFEDGAKLRIVNGKYSIPVNDTRYTVFHDLIRAMLKVNPVERLSIAEVVRQLQEIAAARNVNPKAPITELLEQNGGYGNSGPSRAQPPCGGTVNSSGVLALAEYDQPYGGFLDILRGGTERLFTNLKDTSSKVIQSVANYAKGDLDISYITSRIAVMSFPAEGVESAIKNNIEDVRMFLDAKHPGHYAVYNLSPRIYRASKFHNRVTECGWAVRRAPHLHSLYTLCRSMHAWLREDHRNVCVVHCMDGRAASAVAVCAFLCFCRLFSTAEAAVYMFSMKRCPPGIWPSHKRYIEYVCDMVAEEPITPHSKPMLVKSVVMTPVPLFSKQRNGCRPFCEVYVGEERVTTTSQEYDRMKEFKIEDGKAVIPLGVTVQGDVLIIIYHARATLGGRLQAKMASMKMFQIQFHTGFVPRNATTVKFAKYDLDACDIQEKYPDLFQVNLEVEVEPRDRPSREAPPWENTSLRGLNPKILFSNREEQQDILSKFGKPELPRQPGSTAQYDAEAGSPEAEITESDSPQSSSTDTNHFLHTLDWQEEKEPETGLDNTSPKESQSVLIADGDGSEVSDEEEASFPSEERKPGAGEDTPRLAAGTKQQDLIFDVGMLAAPQEPVQPEEGVDLLGLHSEGDLRPAAPLQACGVPSSNTDLLSCLLEPSDAAQVGPPGDLLGGEAPLLLASPVSPLGLQNNLQGKVPDTVDPFDQFLLSSNSDTQPCSKPDLFGEFLNSDSVASSTAFPSTHSAPPPSCSTAFLHLGDLPAEPSKVIASSSHPDLLGGWDTWADTATPGPASIPVPEGTLFSSAGHPAPPGPNPSQTKSQNLDPFADLSDLSSSLQGLPAGLPAGGFVGAPAPTQKSNSPWQANRPTAPGTSWTPQAKPAPRASEQLRSHFSVIGAREERGVRVPSFAQKPKVSENDFEDLLPNQGFSKSDKKGPKTMAEMRKQELARDTDPLKLKLLDWIEGKERNIRALLSTLHTVLWDGESRWTPVSMADLVTPEQVKKQYRRAVLVVHPDKATGQPYEQYAKMIFMELNDAWSEFENQGSRPLF</sequence>
<organism>
    <name type="scientific">Mus musculus</name>
    <name type="common">Mouse</name>
    <dbReference type="NCBI Taxonomy" id="10090"/>
    <lineage>
        <taxon>Eukaryota</taxon>
        <taxon>Metazoa</taxon>
        <taxon>Chordata</taxon>
        <taxon>Craniata</taxon>
        <taxon>Vertebrata</taxon>
        <taxon>Euteleostomi</taxon>
        <taxon>Mammalia</taxon>
        <taxon>Eutheria</taxon>
        <taxon>Euarchontoglires</taxon>
        <taxon>Glires</taxon>
        <taxon>Rodentia</taxon>
        <taxon>Myomorpha</taxon>
        <taxon>Muroidea</taxon>
        <taxon>Muridae</taxon>
        <taxon>Murinae</taxon>
        <taxon>Mus</taxon>
        <taxon>Mus</taxon>
    </lineage>
</organism>
<comment type="function">
    <text evidence="1">Associates with cyclin G and CDK5. Seems to act as an auxilin homolog that is involved in the uncoating of clathrin-coated vesicles by Hsc70 in non-neuronal cells. Expression oscillates slightly during the cell cycle, peaking at G1. May play a role in clathrin-mediated endocytosis and intracellular trafficking, and in the dynamics of clathrin assembly/disassembly.</text>
</comment>
<comment type="catalytic activity">
    <reaction>
        <text>L-seryl-[protein] + ATP = O-phospho-L-seryl-[protein] + ADP + H(+)</text>
        <dbReference type="Rhea" id="RHEA:17989"/>
        <dbReference type="Rhea" id="RHEA-COMP:9863"/>
        <dbReference type="Rhea" id="RHEA-COMP:11604"/>
        <dbReference type="ChEBI" id="CHEBI:15378"/>
        <dbReference type="ChEBI" id="CHEBI:29999"/>
        <dbReference type="ChEBI" id="CHEBI:30616"/>
        <dbReference type="ChEBI" id="CHEBI:83421"/>
        <dbReference type="ChEBI" id="CHEBI:456216"/>
        <dbReference type="EC" id="2.7.11.1"/>
    </reaction>
</comment>
<comment type="catalytic activity">
    <reaction>
        <text>L-threonyl-[protein] + ATP = O-phospho-L-threonyl-[protein] + ADP + H(+)</text>
        <dbReference type="Rhea" id="RHEA:46608"/>
        <dbReference type="Rhea" id="RHEA-COMP:11060"/>
        <dbReference type="Rhea" id="RHEA-COMP:11605"/>
        <dbReference type="ChEBI" id="CHEBI:15378"/>
        <dbReference type="ChEBI" id="CHEBI:30013"/>
        <dbReference type="ChEBI" id="CHEBI:30616"/>
        <dbReference type="ChEBI" id="CHEBI:61977"/>
        <dbReference type="ChEBI" id="CHEBI:456216"/>
        <dbReference type="EC" id="2.7.11.1"/>
    </reaction>
</comment>
<comment type="interaction">
    <interactant intactId="EBI-7652906">
        <id>Q99KY4</id>
    </interactant>
    <interactant intactId="EBI-6253448">
        <id>P97378</id>
        <label>Il12rb2</label>
    </interactant>
    <organismsDiffer>false</organismsDiffer>
    <experiments>7</experiments>
</comment>
<comment type="subcellular location">
    <subcellularLocation>
        <location evidence="1">Cytoplasm</location>
        <location evidence="1">Perinuclear region</location>
    </subcellularLocation>
    <subcellularLocation>
        <location evidence="1">Golgi apparatus</location>
        <location evidence="1">trans-Golgi network</location>
    </subcellularLocation>
    <subcellularLocation>
        <location evidence="1">Cell junction</location>
        <location evidence="1">Focal adhesion</location>
    </subcellularLocation>
    <subcellularLocation>
        <location evidence="1">Cytoplasmic vesicle</location>
        <location evidence="1">Clathrin-coated vesicle</location>
    </subcellularLocation>
    <text evidence="1">Localizes to the perinuclear area and to the trans-Golgi network. Also seen on the plasma membrane, probably at focal adhesions. Recruitment to clathrin-coated vesicles depends on temporal variations in phosphoinositide composition of clathrin-coated vesicles.</text>
</comment>
<comment type="alternative products">
    <event type="alternative splicing"/>
    <isoform>
        <id>Q99KY4-1</id>
        <name>1</name>
        <sequence type="displayed"/>
    </isoform>
    <isoform>
        <id>Q99KY4-2</id>
        <name>2</name>
        <sequence type="described" ref="VSP_015821"/>
    </isoform>
</comment>
<comment type="similarity">
    <text evidence="3">Belongs to the protein kinase superfamily. Ser/Thr protein kinase family.</text>
</comment>
<feature type="initiator methionine" description="Removed" evidence="1">
    <location>
        <position position="1"/>
    </location>
</feature>
<feature type="chain" id="PRO_0000085959" description="Cyclin-G-associated kinase">
    <location>
        <begin position="2"/>
        <end position="1305"/>
    </location>
</feature>
<feature type="domain" description="Protein kinase" evidence="3">
    <location>
        <begin position="40"/>
        <end position="317"/>
    </location>
</feature>
<feature type="domain" description="Phosphatase tensin-type" evidence="6">
    <location>
        <begin position="397"/>
        <end position="564"/>
    </location>
</feature>
<feature type="domain" description="C2 tensin-type" evidence="5">
    <location>
        <begin position="570"/>
        <end position="708"/>
    </location>
</feature>
<feature type="domain" description="J" evidence="4">
    <location>
        <begin position="1241"/>
        <end position="1305"/>
    </location>
</feature>
<feature type="region of interest" description="Disordered" evidence="8">
    <location>
        <begin position="707"/>
        <end position="732"/>
    </location>
</feature>
<feature type="region of interest" description="Disordered" evidence="8">
    <location>
        <begin position="747"/>
        <end position="854"/>
    </location>
</feature>
<feature type="region of interest" description="Disordered" evidence="8">
    <location>
        <begin position="1037"/>
        <end position="1139"/>
    </location>
</feature>
<feature type="compositionally biased region" description="Polar residues" evidence="8">
    <location>
        <begin position="776"/>
        <end position="789"/>
    </location>
</feature>
<feature type="compositionally biased region" description="Polar residues" evidence="8">
    <location>
        <begin position="805"/>
        <end position="816"/>
    </location>
</feature>
<feature type="compositionally biased region" description="Acidic residues" evidence="8">
    <location>
        <begin position="822"/>
        <end position="832"/>
    </location>
</feature>
<feature type="compositionally biased region" description="Basic and acidic residues" evidence="8">
    <location>
        <begin position="836"/>
        <end position="848"/>
    </location>
</feature>
<feature type="compositionally biased region" description="Low complexity" evidence="8">
    <location>
        <begin position="1084"/>
        <end position="1099"/>
    </location>
</feature>
<feature type="compositionally biased region" description="Polar residues" evidence="8">
    <location>
        <begin position="1111"/>
        <end position="1132"/>
    </location>
</feature>
<feature type="active site" description="Proton acceptor" evidence="3 7">
    <location>
        <position position="173"/>
    </location>
</feature>
<feature type="binding site" evidence="3">
    <location>
        <begin position="46"/>
        <end position="54"/>
    </location>
    <ligand>
        <name>ATP</name>
        <dbReference type="ChEBI" id="CHEBI:30616"/>
    </ligand>
</feature>
<feature type="binding site" evidence="3">
    <location>
        <position position="69"/>
    </location>
    <ligand>
        <name>ATP</name>
        <dbReference type="ChEBI" id="CHEBI:30616"/>
    </ligand>
</feature>
<feature type="modified residue" description="N-acetylserine" evidence="1">
    <location>
        <position position="2"/>
    </location>
</feature>
<feature type="modified residue" description="Phosphoserine" evidence="2">
    <location>
        <position position="2"/>
    </location>
</feature>
<feature type="modified residue" description="Phosphoserine" evidence="1">
    <location>
        <position position="16"/>
    </location>
</feature>
<feature type="modified residue" description="Phosphoserine" evidence="1">
    <location>
        <position position="454"/>
    </location>
</feature>
<feature type="modified residue" description="Phosphoserine" evidence="1">
    <location>
        <position position="768"/>
    </location>
</feature>
<feature type="modified residue" description="Phosphothreonine" evidence="1">
    <location>
        <position position="774"/>
    </location>
</feature>
<feature type="modified residue" description="Phosphoserine" evidence="1">
    <location>
        <position position="781"/>
    </location>
</feature>
<feature type="modified residue" description="Phosphothreonine" evidence="1">
    <location>
        <position position="792"/>
    </location>
</feature>
<feature type="modified residue" description="Phosphoserine" evidence="2">
    <location>
        <position position="809"/>
    </location>
</feature>
<feature type="modified residue" description="Phosphoserine" evidence="13">
    <location>
        <position position="824"/>
    </location>
</feature>
<feature type="modified residue" description="Phosphoserine" evidence="12 13">
    <location>
        <position position="827"/>
    </location>
</feature>
<feature type="modified residue" description="Phosphoserine" evidence="1">
    <location>
        <position position="938"/>
    </location>
</feature>
<feature type="modified residue" description="Omega-N-methylarginine" evidence="14">
    <location>
        <position position="1122"/>
    </location>
</feature>
<feature type="modified residue" description="Phosphoserine" evidence="1">
    <location>
        <position position="1171"/>
    </location>
</feature>
<feature type="splice variant" id="VSP_015821" description="In isoform 2." evidence="9">
    <location>
        <begin position="748"/>
        <end position="796"/>
    </location>
</feature>
<feature type="sequence conflict" description="In Ref. 1; BAE38941 and 2; AAH65052." evidence="10" ref="1 2">
    <original>V</original>
    <variation>E</variation>
    <location>
        <position position="301"/>
    </location>
</feature>
<feature type="sequence conflict" description="In Ref. 1; BAC28779." evidence="10" ref="1">
    <original>D</original>
    <variation>G</variation>
    <location>
        <position position="822"/>
    </location>
</feature>
<feature type="sequence conflict" description="In Ref. 2; AAH03958/AAH30859." evidence="10" ref="2">
    <original>A</original>
    <variation>V</variation>
    <location>
        <position position="868"/>
    </location>
</feature>
<proteinExistence type="evidence at protein level"/>
<dbReference type="EC" id="2.7.11.1"/>
<dbReference type="EMBL" id="AK034637">
    <property type="protein sequence ID" value="BAC28779.1"/>
    <property type="molecule type" value="mRNA"/>
</dbReference>
<dbReference type="EMBL" id="AK166682">
    <property type="protein sequence ID" value="BAE38941.1"/>
    <property type="molecule type" value="mRNA"/>
</dbReference>
<dbReference type="EMBL" id="BC003958">
    <property type="protein sequence ID" value="AAH03958.1"/>
    <property type="molecule type" value="mRNA"/>
</dbReference>
<dbReference type="EMBL" id="BC030859">
    <property type="protein sequence ID" value="AAH30859.1"/>
    <property type="molecule type" value="mRNA"/>
</dbReference>
<dbReference type="EMBL" id="BC060622">
    <property type="protein sequence ID" value="AAH60622.1"/>
    <property type="molecule type" value="mRNA"/>
</dbReference>
<dbReference type="EMBL" id="BC065052">
    <property type="protein sequence ID" value="AAH65052.1"/>
    <property type="molecule type" value="mRNA"/>
</dbReference>
<dbReference type="CCDS" id="CCDS19513.1">
    <molecule id="Q99KY4-1"/>
</dbReference>
<dbReference type="RefSeq" id="NP_001268980.1">
    <property type="nucleotide sequence ID" value="NM_001282051.1"/>
</dbReference>
<dbReference type="RefSeq" id="NP_001268981.1">
    <property type="nucleotide sequence ID" value="NM_001282052.1"/>
</dbReference>
<dbReference type="RefSeq" id="NP_705797.1">
    <property type="nucleotide sequence ID" value="NM_153569.2"/>
</dbReference>
<dbReference type="SMR" id="Q99KY4"/>
<dbReference type="BioGRID" id="231137">
    <property type="interactions" value="20"/>
</dbReference>
<dbReference type="FunCoup" id="Q99KY4">
    <property type="interactions" value="3150"/>
</dbReference>
<dbReference type="IntAct" id="Q99KY4">
    <property type="interactions" value="2"/>
</dbReference>
<dbReference type="MINT" id="Q99KY4"/>
<dbReference type="STRING" id="10090.ENSMUSP00000036705"/>
<dbReference type="GlyConnect" id="2244">
    <property type="glycosylation" value="1 N-Linked glycan (1 site)"/>
</dbReference>
<dbReference type="GlyCosmos" id="Q99KY4">
    <property type="glycosylation" value="1 site, 1 glycan"/>
</dbReference>
<dbReference type="GlyGen" id="Q99KY4">
    <property type="glycosylation" value="7 sites, 5 N-linked glycans (4 sites), 1 O-linked glycan (2 sites)"/>
</dbReference>
<dbReference type="iPTMnet" id="Q99KY4"/>
<dbReference type="PhosphoSitePlus" id="Q99KY4"/>
<dbReference type="SwissPalm" id="Q99KY4"/>
<dbReference type="jPOST" id="Q99KY4"/>
<dbReference type="PaxDb" id="10090-ENSMUSP00000036705"/>
<dbReference type="ProteomicsDB" id="273024">
    <molecule id="Q99KY4-1"/>
</dbReference>
<dbReference type="ProteomicsDB" id="273025">
    <molecule id="Q99KY4-2"/>
</dbReference>
<dbReference type="Pumba" id="Q99KY4"/>
<dbReference type="DNASU" id="231580"/>
<dbReference type="GeneID" id="231580"/>
<dbReference type="KEGG" id="mmu:231580"/>
<dbReference type="UCSC" id="uc008yoh.2">
    <molecule id="Q99KY4-1"/>
    <property type="organism name" value="mouse"/>
</dbReference>
<dbReference type="AGR" id="MGI:2442153"/>
<dbReference type="CTD" id="2580"/>
<dbReference type="MGI" id="MGI:2442153">
    <property type="gene designation" value="Gak"/>
</dbReference>
<dbReference type="eggNOG" id="KOG0431">
    <property type="taxonomic scope" value="Eukaryota"/>
</dbReference>
<dbReference type="eggNOG" id="KOG1989">
    <property type="taxonomic scope" value="Eukaryota"/>
</dbReference>
<dbReference type="eggNOG" id="KOG2283">
    <property type="taxonomic scope" value="Eukaryota"/>
</dbReference>
<dbReference type="InParanoid" id="Q99KY4"/>
<dbReference type="OrthoDB" id="1717591at2759"/>
<dbReference type="PhylomeDB" id="Q99KY4"/>
<dbReference type="TreeFam" id="TF105165"/>
<dbReference type="Reactome" id="R-MMU-432722">
    <property type="pathway name" value="Golgi Associated Vesicle Biogenesis"/>
</dbReference>
<dbReference type="Reactome" id="R-MMU-8856828">
    <property type="pathway name" value="Clathrin-mediated endocytosis"/>
</dbReference>
<dbReference type="BioGRID-ORCS" id="231580">
    <property type="hits" value="19 hits in 84 CRISPR screens"/>
</dbReference>
<dbReference type="CD-CODE" id="CE726F99">
    <property type="entry name" value="Postsynaptic density"/>
</dbReference>
<dbReference type="ChiTaRS" id="Gak">
    <property type="organism name" value="mouse"/>
</dbReference>
<dbReference type="PRO" id="PR:Q99KY4"/>
<dbReference type="Proteomes" id="UP000000589">
    <property type="component" value="Unplaced"/>
</dbReference>
<dbReference type="RNAct" id="Q99KY4">
    <property type="molecule type" value="protein"/>
</dbReference>
<dbReference type="GO" id="GO:0030136">
    <property type="term" value="C:clathrin-coated vesicle"/>
    <property type="evidence" value="ECO:0000250"/>
    <property type="project" value="UniProtKB"/>
</dbReference>
<dbReference type="GO" id="GO:0005925">
    <property type="term" value="C:focal adhesion"/>
    <property type="evidence" value="ECO:0007669"/>
    <property type="project" value="UniProtKB-SubCell"/>
</dbReference>
<dbReference type="GO" id="GO:0005794">
    <property type="term" value="C:Golgi apparatus"/>
    <property type="evidence" value="ECO:0007669"/>
    <property type="project" value="UniProtKB-SubCell"/>
</dbReference>
<dbReference type="GO" id="GO:0048471">
    <property type="term" value="C:perinuclear region of cytoplasm"/>
    <property type="evidence" value="ECO:0007669"/>
    <property type="project" value="UniProtKB-SubCell"/>
</dbReference>
<dbReference type="GO" id="GO:0031982">
    <property type="term" value="C:vesicle"/>
    <property type="evidence" value="ECO:0000250"/>
    <property type="project" value="ParkinsonsUK-UCL"/>
</dbReference>
<dbReference type="GO" id="GO:0005524">
    <property type="term" value="F:ATP binding"/>
    <property type="evidence" value="ECO:0007669"/>
    <property type="project" value="UniProtKB-KW"/>
</dbReference>
<dbReference type="GO" id="GO:0106310">
    <property type="term" value="F:protein serine kinase activity"/>
    <property type="evidence" value="ECO:0007669"/>
    <property type="project" value="RHEA"/>
</dbReference>
<dbReference type="GO" id="GO:0004674">
    <property type="term" value="F:protein serine/threonine kinase activity"/>
    <property type="evidence" value="ECO:0007669"/>
    <property type="project" value="UniProtKB-KW"/>
</dbReference>
<dbReference type="GO" id="GO:0072318">
    <property type="term" value="P:clathrin coat disassembly"/>
    <property type="evidence" value="ECO:0000316"/>
    <property type="project" value="MGI"/>
</dbReference>
<dbReference type="GO" id="GO:0072583">
    <property type="term" value="P:clathrin-dependent endocytosis"/>
    <property type="evidence" value="ECO:0000315"/>
    <property type="project" value="MGI"/>
</dbReference>
<dbReference type="GO" id="GO:0007029">
    <property type="term" value="P:endoplasmic reticulum organization"/>
    <property type="evidence" value="ECO:0000315"/>
    <property type="project" value="MGI"/>
</dbReference>
<dbReference type="GO" id="GO:0009913">
    <property type="term" value="P:epidermal cell differentiation"/>
    <property type="evidence" value="ECO:0000315"/>
    <property type="project" value="MGI"/>
</dbReference>
<dbReference type="GO" id="GO:0002064">
    <property type="term" value="P:epithelial cell development"/>
    <property type="evidence" value="ECO:0000315"/>
    <property type="project" value="MGI"/>
</dbReference>
<dbReference type="GO" id="GO:0061436">
    <property type="term" value="P:establishment of skin barrier"/>
    <property type="evidence" value="ECO:0000315"/>
    <property type="project" value="MGI"/>
</dbReference>
<dbReference type="GO" id="GO:0048853">
    <property type="term" value="P:forebrain morphogenesis"/>
    <property type="evidence" value="ECO:0000315"/>
    <property type="project" value="MGI"/>
</dbReference>
<dbReference type="GO" id="GO:0007030">
    <property type="term" value="P:Golgi organization"/>
    <property type="evidence" value="ECO:0000315"/>
    <property type="project" value="MGI"/>
</dbReference>
<dbReference type="GO" id="GO:0046907">
    <property type="term" value="P:intracellular transport"/>
    <property type="evidence" value="ECO:0000250"/>
    <property type="project" value="UniProtKB"/>
</dbReference>
<dbReference type="GO" id="GO:0035622">
    <property type="term" value="P:intrahepatic bile duct development"/>
    <property type="evidence" value="ECO:0000315"/>
    <property type="project" value="MGI"/>
</dbReference>
<dbReference type="GO" id="GO:0030216">
    <property type="term" value="P:keratinocyte differentiation"/>
    <property type="evidence" value="ECO:0000315"/>
    <property type="project" value="MGI"/>
</dbReference>
<dbReference type="GO" id="GO:0010977">
    <property type="term" value="P:negative regulation of neuron projection development"/>
    <property type="evidence" value="ECO:0000250"/>
    <property type="project" value="ParkinsonsUK-UCL"/>
</dbReference>
<dbReference type="GO" id="GO:0061351">
    <property type="term" value="P:neural precursor cell proliferation"/>
    <property type="evidence" value="ECO:0000315"/>
    <property type="project" value="MGI"/>
</dbReference>
<dbReference type="GO" id="GO:0060563">
    <property type="term" value="P:neuroepithelial cell differentiation"/>
    <property type="evidence" value="ECO:0000315"/>
    <property type="project" value="MGI"/>
</dbReference>
<dbReference type="GO" id="GO:2000179">
    <property type="term" value="P:positive regulation of neural precursor cell proliferation"/>
    <property type="evidence" value="ECO:0000315"/>
    <property type="project" value="MGI"/>
</dbReference>
<dbReference type="GO" id="GO:1905443">
    <property type="term" value="P:regulation of clathrin coat assembly"/>
    <property type="evidence" value="ECO:0000250"/>
    <property type="project" value="UniProtKB"/>
</dbReference>
<dbReference type="GO" id="GO:0048863">
    <property type="term" value="P:stem cell differentiation"/>
    <property type="evidence" value="ECO:0000315"/>
    <property type="project" value="MGI"/>
</dbReference>
<dbReference type="CDD" id="cd06257">
    <property type="entry name" value="DnaJ"/>
    <property type="match status" value="1"/>
</dbReference>
<dbReference type="CDD" id="cd14564">
    <property type="entry name" value="PTP_GAK"/>
    <property type="match status" value="1"/>
</dbReference>
<dbReference type="CDD" id="cd14036">
    <property type="entry name" value="STKc_GAK"/>
    <property type="match status" value="1"/>
</dbReference>
<dbReference type="FunFam" id="1.10.510.10:FF:000228">
    <property type="entry name" value="cyclin-G-associated kinase isoform X1"/>
    <property type="match status" value="1"/>
</dbReference>
<dbReference type="FunFam" id="2.60.40.1110:FF:000001">
    <property type="entry name" value="cyclin-G-associated kinase isoform X2"/>
    <property type="match status" value="1"/>
</dbReference>
<dbReference type="FunFam" id="1.10.287.110:FF:000002">
    <property type="entry name" value="putative tyrosine-protein phosphatase auxilin isoform X2"/>
    <property type="match status" value="1"/>
</dbReference>
<dbReference type="FunFam" id="3.90.190.10:FF:000008">
    <property type="entry name" value="putative tyrosine-protein phosphatase auxilin isoform X2"/>
    <property type="match status" value="1"/>
</dbReference>
<dbReference type="Gene3D" id="2.60.40.1110">
    <property type="match status" value="1"/>
</dbReference>
<dbReference type="Gene3D" id="1.10.287.110">
    <property type="entry name" value="DnaJ domain"/>
    <property type="match status" value="1"/>
</dbReference>
<dbReference type="Gene3D" id="3.90.190.10">
    <property type="entry name" value="Protein tyrosine phosphatase superfamily"/>
    <property type="match status" value="1"/>
</dbReference>
<dbReference type="Gene3D" id="1.10.510.10">
    <property type="entry name" value="Transferase(Phosphotransferase) domain 1"/>
    <property type="match status" value="1"/>
</dbReference>
<dbReference type="InterPro" id="IPR035892">
    <property type="entry name" value="C2_domain_sf"/>
</dbReference>
<dbReference type="InterPro" id="IPR001623">
    <property type="entry name" value="DnaJ_domain"/>
</dbReference>
<dbReference type="InterPro" id="IPR036869">
    <property type="entry name" value="J_dom_sf"/>
</dbReference>
<dbReference type="InterPro" id="IPR011009">
    <property type="entry name" value="Kinase-like_dom_sf"/>
</dbReference>
<dbReference type="InterPro" id="IPR029021">
    <property type="entry name" value="Prot-tyrosine_phosphatase-like"/>
</dbReference>
<dbReference type="InterPro" id="IPR000719">
    <property type="entry name" value="Prot_kinase_dom"/>
</dbReference>
<dbReference type="InterPro" id="IPR008271">
    <property type="entry name" value="Ser/Thr_kinase_AS"/>
</dbReference>
<dbReference type="InterPro" id="IPR014020">
    <property type="entry name" value="Tensin_C2-dom"/>
</dbReference>
<dbReference type="InterPro" id="IPR029023">
    <property type="entry name" value="Tensin_phosphatase"/>
</dbReference>
<dbReference type="PANTHER" id="PTHR23172">
    <property type="entry name" value="AUXILIN/CYCLIN G-ASSOCIATED KINASE-RELATED"/>
    <property type="match status" value="1"/>
</dbReference>
<dbReference type="PANTHER" id="PTHR23172:SF34">
    <property type="entry name" value="CYCLIN-G-ASSOCIATED KINASE"/>
    <property type="match status" value="1"/>
</dbReference>
<dbReference type="Pfam" id="PF00069">
    <property type="entry name" value="Pkinase"/>
    <property type="match status" value="1"/>
</dbReference>
<dbReference type="Pfam" id="PF10409">
    <property type="entry name" value="PTEN_C2"/>
    <property type="match status" value="1"/>
</dbReference>
<dbReference type="SMART" id="SM00271">
    <property type="entry name" value="DnaJ"/>
    <property type="match status" value="1"/>
</dbReference>
<dbReference type="SMART" id="SM01326">
    <property type="entry name" value="PTEN_C2"/>
    <property type="match status" value="1"/>
</dbReference>
<dbReference type="SMART" id="SM00220">
    <property type="entry name" value="S_TKc"/>
    <property type="match status" value="1"/>
</dbReference>
<dbReference type="SUPFAM" id="SSF52799">
    <property type="entry name" value="(Phosphotyrosine protein) phosphatases II"/>
    <property type="match status" value="1"/>
</dbReference>
<dbReference type="SUPFAM" id="SSF49562">
    <property type="entry name" value="C2 domain (Calcium/lipid-binding domain, CaLB)"/>
    <property type="match status" value="1"/>
</dbReference>
<dbReference type="SUPFAM" id="SSF46565">
    <property type="entry name" value="Chaperone J-domain"/>
    <property type="match status" value="1"/>
</dbReference>
<dbReference type="SUPFAM" id="SSF56112">
    <property type="entry name" value="Protein kinase-like (PK-like)"/>
    <property type="match status" value="1"/>
</dbReference>
<dbReference type="PROSITE" id="PS51182">
    <property type="entry name" value="C2_TENSIN"/>
    <property type="match status" value="1"/>
</dbReference>
<dbReference type="PROSITE" id="PS50076">
    <property type="entry name" value="DNAJ_2"/>
    <property type="match status" value="1"/>
</dbReference>
<dbReference type="PROSITE" id="PS51181">
    <property type="entry name" value="PPASE_TENSIN"/>
    <property type="match status" value="1"/>
</dbReference>
<dbReference type="PROSITE" id="PS50011">
    <property type="entry name" value="PROTEIN_KINASE_DOM"/>
    <property type="match status" value="1"/>
</dbReference>
<dbReference type="PROSITE" id="PS00108">
    <property type="entry name" value="PROTEIN_KINASE_ST"/>
    <property type="match status" value="1"/>
</dbReference>
<accession>Q99KY4</accession>
<accession>Q6P1I8</accession>
<accession>Q6P9S5</accession>
<accession>Q8BM74</accession>
<accession>Q8K0Q4</accession>
<reference key="1">
    <citation type="journal article" date="2005" name="Science">
        <title>The transcriptional landscape of the mammalian genome.</title>
        <authorList>
            <person name="Carninci P."/>
            <person name="Kasukawa T."/>
            <person name="Katayama S."/>
            <person name="Gough J."/>
            <person name="Frith M.C."/>
            <person name="Maeda N."/>
            <person name="Oyama R."/>
            <person name="Ravasi T."/>
            <person name="Lenhard B."/>
            <person name="Wells C."/>
            <person name="Kodzius R."/>
            <person name="Shimokawa K."/>
            <person name="Bajic V.B."/>
            <person name="Brenner S.E."/>
            <person name="Batalov S."/>
            <person name="Forrest A.R."/>
            <person name="Zavolan M."/>
            <person name="Davis M.J."/>
            <person name="Wilming L.G."/>
            <person name="Aidinis V."/>
            <person name="Allen J.E."/>
            <person name="Ambesi-Impiombato A."/>
            <person name="Apweiler R."/>
            <person name="Aturaliya R.N."/>
            <person name="Bailey T.L."/>
            <person name="Bansal M."/>
            <person name="Baxter L."/>
            <person name="Beisel K.W."/>
            <person name="Bersano T."/>
            <person name="Bono H."/>
            <person name="Chalk A.M."/>
            <person name="Chiu K.P."/>
            <person name="Choudhary V."/>
            <person name="Christoffels A."/>
            <person name="Clutterbuck D.R."/>
            <person name="Crowe M.L."/>
            <person name="Dalla E."/>
            <person name="Dalrymple B.P."/>
            <person name="de Bono B."/>
            <person name="Della Gatta G."/>
            <person name="di Bernardo D."/>
            <person name="Down T."/>
            <person name="Engstrom P."/>
            <person name="Fagiolini M."/>
            <person name="Faulkner G."/>
            <person name="Fletcher C.F."/>
            <person name="Fukushima T."/>
            <person name="Furuno M."/>
            <person name="Futaki S."/>
            <person name="Gariboldi M."/>
            <person name="Georgii-Hemming P."/>
            <person name="Gingeras T.R."/>
            <person name="Gojobori T."/>
            <person name="Green R.E."/>
            <person name="Gustincich S."/>
            <person name="Harbers M."/>
            <person name="Hayashi Y."/>
            <person name="Hensch T.K."/>
            <person name="Hirokawa N."/>
            <person name="Hill D."/>
            <person name="Huminiecki L."/>
            <person name="Iacono M."/>
            <person name="Ikeo K."/>
            <person name="Iwama A."/>
            <person name="Ishikawa T."/>
            <person name="Jakt M."/>
            <person name="Kanapin A."/>
            <person name="Katoh M."/>
            <person name="Kawasawa Y."/>
            <person name="Kelso J."/>
            <person name="Kitamura H."/>
            <person name="Kitano H."/>
            <person name="Kollias G."/>
            <person name="Krishnan S.P."/>
            <person name="Kruger A."/>
            <person name="Kummerfeld S.K."/>
            <person name="Kurochkin I.V."/>
            <person name="Lareau L.F."/>
            <person name="Lazarevic D."/>
            <person name="Lipovich L."/>
            <person name="Liu J."/>
            <person name="Liuni S."/>
            <person name="McWilliam S."/>
            <person name="Madan Babu M."/>
            <person name="Madera M."/>
            <person name="Marchionni L."/>
            <person name="Matsuda H."/>
            <person name="Matsuzawa S."/>
            <person name="Miki H."/>
            <person name="Mignone F."/>
            <person name="Miyake S."/>
            <person name="Morris K."/>
            <person name="Mottagui-Tabar S."/>
            <person name="Mulder N."/>
            <person name="Nakano N."/>
            <person name="Nakauchi H."/>
            <person name="Ng P."/>
            <person name="Nilsson R."/>
            <person name="Nishiguchi S."/>
            <person name="Nishikawa S."/>
            <person name="Nori F."/>
            <person name="Ohara O."/>
            <person name="Okazaki Y."/>
            <person name="Orlando V."/>
            <person name="Pang K.C."/>
            <person name="Pavan W.J."/>
            <person name="Pavesi G."/>
            <person name="Pesole G."/>
            <person name="Petrovsky N."/>
            <person name="Piazza S."/>
            <person name="Reed J."/>
            <person name="Reid J.F."/>
            <person name="Ring B.Z."/>
            <person name="Ringwald M."/>
            <person name="Rost B."/>
            <person name="Ruan Y."/>
            <person name="Salzberg S.L."/>
            <person name="Sandelin A."/>
            <person name="Schneider C."/>
            <person name="Schoenbach C."/>
            <person name="Sekiguchi K."/>
            <person name="Semple C.A."/>
            <person name="Seno S."/>
            <person name="Sessa L."/>
            <person name="Sheng Y."/>
            <person name="Shibata Y."/>
            <person name="Shimada H."/>
            <person name="Shimada K."/>
            <person name="Silva D."/>
            <person name="Sinclair B."/>
            <person name="Sperling S."/>
            <person name="Stupka E."/>
            <person name="Sugiura K."/>
            <person name="Sultana R."/>
            <person name="Takenaka Y."/>
            <person name="Taki K."/>
            <person name="Tammoja K."/>
            <person name="Tan S.L."/>
            <person name="Tang S."/>
            <person name="Taylor M.S."/>
            <person name="Tegner J."/>
            <person name="Teichmann S.A."/>
            <person name="Ueda H.R."/>
            <person name="van Nimwegen E."/>
            <person name="Verardo R."/>
            <person name="Wei C.L."/>
            <person name="Yagi K."/>
            <person name="Yamanishi H."/>
            <person name="Zabarovsky E."/>
            <person name="Zhu S."/>
            <person name="Zimmer A."/>
            <person name="Hide W."/>
            <person name="Bult C."/>
            <person name="Grimmond S.M."/>
            <person name="Teasdale R.D."/>
            <person name="Liu E.T."/>
            <person name="Brusic V."/>
            <person name="Quackenbush J."/>
            <person name="Wahlestedt C."/>
            <person name="Mattick J.S."/>
            <person name="Hume D.A."/>
            <person name="Kai C."/>
            <person name="Sasaki D."/>
            <person name="Tomaru Y."/>
            <person name="Fukuda S."/>
            <person name="Kanamori-Katayama M."/>
            <person name="Suzuki M."/>
            <person name="Aoki J."/>
            <person name="Arakawa T."/>
            <person name="Iida J."/>
            <person name="Imamura K."/>
            <person name="Itoh M."/>
            <person name="Kato T."/>
            <person name="Kawaji H."/>
            <person name="Kawagashira N."/>
            <person name="Kawashima T."/>
            <person name="Kojima M."/>
            <person name="Kondo S."/>
            <person name="Konno H."/>
            <person name="Nakano K."/>
            <person name="Ninomiya N."/>
            <person name="Nishio T."/>
            <person name="Okada M."/>
            <person name="Plessy C."/>
            <person name="Shibata K."/>
            <person name="Shiraki T."/>
            <person name="Suzuki S."/>
            <person name="Tagami M."/>
            <person name="Waki K."/>
            <person name="Watahiki A."/>
            <person name="Okamura-Oho Y."/>
            <person name="Suzuki H."/>
            <person name="Kawai J."/>
            <person name="Hayashizaki Y."/>
        </authorList>
    </citation>
    <scope>NUCLEOTIDE SEQUENCE [LARGE SCALE MRNA] (ISOFORM 1)</scope>
    <source>
        <strain>C57BL/6J</strain>
        <tissue>Blastocyst</tissue>
        <tissue>Embryo</tissue>
    </source>
</reference>
<reference key="2">
    <citation type="journal article" date="2004" name="Genome Res.">
        <title>The status, quality, and expansion of the NIH full-length cDNA project: the Mammalian Gene Collection (MGC).</title>
        <authorList>
            <consortium name="The MGC Project Team"/>
        </authorList>
    </citation>
    <scope>NUCLEOTIDE SEQUENCE [LARGE SCALE MRNA] (ISOFORMS 1 AND 2)</scope>
    <source>
        <strain>C57BL/6J</strain>
        <strain>FVB/N</strain>
        <tissue>Brain</tissue>
        <tissue>Colon</tissue>
        <tissue>Mammary tumor</tissue>
    </source>
</reference>
<reference key="3">
    <citation type="journal article" date="2007" name="Proc. Natl. Acad. Sci. U.S.A.">
        <title>Large-scale phosphorylation analysis of mouse liver.</title>
        <authorList>
            <person name="Villen J."/>
            <person name="Beausoleil S.A."/>
            <person name="Gerber S.A."/>
            <person name="Gygi S.P."/>
        </authorList>
    </citation>
    <scope>PHOSPHORYLATION [LARGE SCALE ANALYSIS] AT SER-827</scope>
    <scope>IDENTIFICATION BY MASS SPECTROMETRY [LARGE SCALE ANALYSIS]</scope>
    <source>
        <tissue>Liver</tissue>
    </source>
</reference>
<reference key="4">
    <citation type="journal article" date="2010" name="Cell">
        <title>A tissue-specific atlas of mouse protein phosphorylation and expression.</title>
        <authorList>
            <person name="Huttlin E.L."/>
            <person name="Jedrychowski M.P."/>
            <person name="Elias J.E."/>
            <person name="Goswami T."/>
            <person name="Rad R."/>
            <person name="Beausoleil S.A."/>
            <person name="Villen J."/>
            <person name="Haas W."/>
            <person name="Sowa M.E."/>
            <person name="Gygi S.P."/>
        </authorList>
    </citation>
    <scope>PHOSPHORYLATION [LARGE SCALE ANALYSIS] AT SER-824 AND SER-827</scope>
    <scope>IDENTIFICATION BY MASS SPECTROMETRY [LARGE SCALE ANALYSIS]</scope>
    <source>
        <tissue>Brain</tissue>
        <tissue>Brown adipose tissue</tissue>
        <tissue>Kidney</tissue>
        <tissue>Liver</tissue>
        <tissue>Lung</tissue>
        <tissue>Pancreas</tissue>
        <tissue>Spleen</tissue>
        <tissue>Testis</tissue>
    </source>
</reference>
<reference key="5">
    <citation type="journal article" date="2014" name="Mol. Cell. Proteomics">
        <title>Immunoaffinity enrichment and mass spectrometry analysis of protein methylation.</title>
        <authorList>
            <person name="Guo A."/>
            <person name="Gu H."/>
            <person name="Zhou J."/>
            <person name="Mulhern D."/>
            <person name="Wang Y."/>
            <person name="Lee K.A."/>
            <person name="Yang V."/>
            <person name="Aguiar M."/>
            <person name="Kornhauser J."/>
            <person name="Jia X."/>
            <person name="Ren J."/>
            <person name="Beausoleil S.A."/>
            <person name="Silva J.C."/>
            <person name="Vemulapalli V."/>
            <person name="Bedford M.T."/>
            <person name="Comb M.J."/>
        </authorList>
    </citation>
    <scope>METHYLATION [LARGE SCALE ANALYSIS] AT ARG-1122</scope>
    <scope>IDENTIFICATION BY MASS SPECTROMETRY [LARGE SCALE ANALYSIS]</scope>
    <source>
        <tissue>Brain</tissue>
    </source>
</reference>
<name>GAK_MOUSE</name>
<protein>
    <recommendedName>
        <fullName evidence="10">Cyclin-G-associated kinase</fullName>
        <ecNumber>2.7.11.1</ecNumber>
    </recommendedName>
    <alternativeName>
        <fullName>DnaJ homolog subfamily C member 26</fullName>
    </alternativeName>
</protein>
<keyword id="KW-0007">Acetylation</keyword>
<keyword id="KW-0025">Alternative splicing</keyword>
<keyword id="KW-0067">ATP-binding</keyword>
<keyword id="KW-0131">Cell cycle</keyword>
<keyword id="KW-0965">Cell junction</keyword>
<keyword id="KW-0963">Cytoplasm</keyword>
<keyword id="KW-0968">Cytoplasmic vesicle</keyword>
<keyword id="KW-0333">Golgi apparatus</keyword>
<keyword id="KW-0418">Kinase</keyword>
<keyword id="KW-0488">Methylation</keyword>
<keyword id="KW-0547">Nucleotide-binding</keyword>
<keyword id="KW-0597">Phosphoprotein</keyword>
<keyword id="KW-1185">Reference proteome</keyword>
<keyword id="KW-0723">Serine/threonine-protein kinase</keyword>
<keyword id="KW-0808">Transferase</keyword>